<accession>B2KAA2</accession>
<dbReference type="EMBL" id="CP001048">
    <property type="protein sequence ID" value="ACC90013.1"/>
    <property type="molecule type" value="Genomic_DNA"/>
</dbReference>
<dbReference type="RefSeq" id="WP_011192843.1">
    <property type="nucleotide sequence ID" value="NZ_CP009780.1"/>
</dbReference>
<dbReference type="SMR" id="B2KAA2"/>
<dbReference type="KEGG" id="ypb:YPTS_3056"/>
<dbReference type="PATRIC" id="fig|502801.10.peg.2488"/>
<dbReference type="GO" id="GO:0005737">
    <property type="term" value="C:cytoplasm"/>
    <property type="evidence" value="ECO:0007669"/>
    <property type="project" value="UniProtKB-SubCell"/>
</dbReference>
<dbReference type="GO" id="GO:0016151">
    <property type="term" value="F:nickel cation binding"/>
    <property type="evidence" value="ECO:0007669"/>
    <property type="project" value="UniProtKB-UniRule"/>
</dbReference>
<dbReference type="Gene3D" id="1.10.4190.10">
    <property type="entry name" value="Urease accessory protein UreF"/>
    <property type="match status" value="1"/>
</dbReference>
<dbReference type="HAMAP" id="MF_01385">
    <property type="entry name" value="UreF"/>
    <property type="match status" value="1"/>
</dbReference>
<dbReference type="InterPro" id="IPR002639">
    <property type="entry name" value="UreF"/>
</dbReference>
<dbReference type="InterPro" id="IPR038277">
    <property type="entry name" value="UreF_sf"/>
</dbReference>
<dbReference type="PANTHER" id="PTHR33620">
    <property type="entry name" value="UREASE ACCESSORY PROTEIN F"/>
    <property type="match status" value="1"/>
</dbReference>
<dbReference type="PANTHER" id="PTHR33620:SF1">
    <property type="entry name" value="UREASE ACCESSORY PROTEIN F"/>
    <property type="match status" value="1"/>
</dbReference>
<dbReference type="Pfam" id="PF01730">
    <property type="entry name" value="UreF"/>
    <property type="match status" value="1"/>
</dbReference>
<dbReference type="PIRSF" id="PIRSF009467">
    <property type="entry name" value="Ureas_acces_UreF"/>
    <property type="match status" value="1"/>
</dbReference>
<gene>
    <name evidence="1" type="primary">ureF</name>
    <name type="ordered locus">YPTS_3056</name>
</gene>
<evidence type="ECO:0000255" key="1">
    <source>
        <dbReference type="HAMAP-Rule" id="MF_01385"/>
    </source>
</evidence>
<protein>
    <recommendedName>
        <fullName evidence="1">Urease accessory protein UreF</fullName>
    </recommendedName>
</protein>
<keyword id="KW-0143">Chaperone</keyword>
<keyword id="KW-0963">Cytoplasm</keyword>
<keyword id="KW-0996">Nickel insertion</keyword>
<feature type="chain" id="PRO_1000145148" description="Urease accessory protein UreF">
    <location>
        <begin position="1"/>
        <end position="228"/>
    </location>
</feature>
<organism>
    <name type="scientific">Yersinia pseudotuberculosis serotype IB (strain PB1/+)</name>
    <dbReference type="NCBI Taxonomy" id="502801"/>
    <lineage>
        <taxon>Bacteria</taxon>
        <taxon>Pseudomonadati</taxon>
        <taxon>Pseudomonadota</taxon>
        <taxon>Gammaproteobacteria</taxon>
        <taxon>Enterobacterales</taxon>
        <taxon>Yersiniaceae</taxon>
        <taxon>Yersinia</taxon>
    </lineage>
</organism>
<sequence>MNASDLIRIMQFGDSVLPVGAFTFSNGVESAIQTGIVHDVATLKGFVLTALKQAASCDGMGVVAAHRAVVADDRDGIIRADWAVNNRKLNEESRLMATRMGKKLAEMSIHVVEHPLISWWLEQIKNGNTAGTYPVTQAVVMAAQGIGQREVVVMHQYGVAMTILSAAMRLMRVTHFDTQHILFELNHDIEKFCDIAEIGDINQMSSYVPIVDVLAAVHVKAHVRLFSN</sequence>
<name>UREF_YERPB</name>
<reference key="1">
    <citation type="submission" date="2008-04" db="EMBL/GenBank/DDBJ databases">
        <title>Complete sequence of Yersinia pseudotuberculosis PB1/+.</title>
        <authorList>
            <person name="Copeland A."/>
            <person name="Lucas S."/>
            <person name="Lapidus A."/>
            <person name="Glavina del Rio T."/>
            <person name="Dalin E."/>
            <person name="Tice H."/>
            <person name="Bruce D."/>
            <person name="Goodwin L."/>
            <person name="Pitluck S."/>
            <person name="Munk A.C."/>
            <person name="Brettin T."/>
            <person name="Detter J.C."/>
            <person name="Han C."/>
            <person name="Tapia R."/>
            <person name="Schmutz J."/>
            <person name="Larimer F."/>
            <person name="Land M."/>
            <person name="Hauser L."/>
            <person name="Challacombe J.F."/>
            <person name="Green L."/>
            <person name="Lindler L.E."/>
            <person name="Nikolich M.P."/>
            <person name="Richardson P."/>
        </authorList>
    </citation>
    <scope>NUCLEOTIDE SEQUENCE [LARGE SCALE GENOMIC DNA]</scope>
    <source>
        <strain>PB1/+</strain>
    </source>
</reference>
<comment type="function">
    <text evidence="1">Required for maturation of urease via the functional incorporation of the urease nickel metallocenter.</text>
</comment>
<comment type="subunit">
    <text evidence="1">UreD, UreF and UreG form a complex that acts as a GTP-hydrolysis-dependent molecular chaperone, activating the urease apoprotein by helping to assemble the nickel containing metallocenter of UreC. The UreE protein probably delivers the nickel.</text>
</comment>
<comment type="subcellular location">
    <subcellularLocation>
        <location evidence="1">Cytoplasm</location>
    </subcellularLocation>
</comment>
<comment type="similarity">
    <text evidence="1">Belongs to the UreF family.</text>
</comment>
<proteinExistence type="inferred from homology"/>